<protein>
    <recommendedName>
        <fullName evidence="1">UPF0352 protein PM1884</fullName>
    </recommendedName>
</protein>
<reference key="1">
    <citation type="journal article" date="2001" name="Proc. Natl. Acad. Sci. U.S.A.">
        <title>Complete genomic sequence of Pasteurella multocida Pm70.</title>
        <authorList>
            <person name="May B.J."/>
            <person name="Zhang Q."/>
            <person name="Li L.L."/>
            <person name="Paustian M.L."/>
            <person name="Whittam T.S."/>
            <person name="Kapur V."/>
        </authorList>
    </citation>
    <scope>NUCLEOTIDE SEQUENCE [LARGE SCALE GENOMIC DNA]</scope>
    <source>
        <strain>Pm70</strain>
    </source>
</reference>
<feature type="chain" id="PRO_0000201792" description="UPF0352 protein PM1884">
    <location>
        <begin position="1"/>
        <end position="74"/>
    </location>
</feature>
<evidence type="ECO:0000255" key="1">
    <source>
        <dbReference type="HAMAP-Rule" id="MF_00816"/>
    </source>
</evidence>
<keyword id="KW-1185">Reference proteome</keyword>
<dbReference type="EMBL" id="AE004439">
    <property type="protein sequence ID" value="AAK03968.1"/>
    <property type="molecule type" value="Genomic_DNA"/>
</dbReference>
<dbReference type="RefSeq" id="WP_005724962.1">
    <property type="nucleotide sequence ID" value="NC_002663.1"/>
</dbReference>
<dbReference type="SMR" id="Q9CJV7"/>
<dbReference type="STRING" id="272843.PM1884"/>
<dbReference type="EnsemblBacteria" id="AAK03968">
    <property type="protein sequence ID" value="AAK03968"/>
    <property type="gene ID" value="PM1884"/>
</dbReference>
<dbReference type="KEGG" id="pmu:PM1884"/>
<dbReference type="HOGENOM" id="CLU_175457_0_0_6"/>
<dbReference type="OrthoDB" id="5771474at2"/>
<dbReference type="Proteomes" id="UP000000809">
    <property type="component" value="Chromosome"/>
</dbReference>
<dbReference type="Gene3D" id="1.10.3390.10">
    <property type="entry name" value="YejL-like"/>
    <property type="match status" value="1"/>
</dbReference>
<dbReference type="HAMAP" id="MF_00816">
    <property type="entry name" value="UPF0352"/>
    <property type="match status" value="1"/>
</dbReference>
<dbReference type="InterPro" id="IPR009857">
    <property type="entry name" value="UPF0352"/>
</dbReference>
<dbReference type="InterPro" id="IPR023202">
    <property type="entry name" value="YejL_sf"/>
</dbReference>
<dbReference type="NCBIfam" id="NF010242">
    <property type="entry name" value="PRK13689.1"/>
    <property type="match status" value="1"/>
</dbReference>
<dbReference type="Pfam" id="PF07208">
    <property type="entry name" value="DUF1414"/>
    <property type="match status" value="1"/>
</dbReference>
<dbReference type="PIRSF" id="PIRSF006188">
    <property type="entry name" value="UCP006188"/>
    <property type="match status" value="1"/>
</dbReference>
<dbReference type="SUPFAM" id="SSF158651">
    <property type="entry name" value="YejL-like"/>
    <property type="match status" value="1"/>
</dbReference>
<proteinExistence type="inferred from homology"/>
<accession>Q9CJV7</accession>
<sequence length="74" mass="8011">MAKNSKYQDKQVDAILNDMIAVLEKHQAPVDLSLVVLGNMVTNLLVSSVGTNQRIALANAFSEALLNSVNKQKS</sequence>
<comment type="similarity">
    <text evidence="1">Belongs to the UPF0352 family.</text>
</comment>
<organism>
    <name type="scientific">Pasteurella multocida (strain Pm70)</name>
    <dbReference type="NCBI Taxonomy" id="272843"/>
    <lineage>
        <taxon>Bacteria</taxon>
        <taxon>Pseudomonadati</taxon>
        <taxon>Pseudomonadota</taxon>
        <taxon>Gammaproteobacteria</taxon>
        <taxon>Pasteurellales</taxon>
        <taxon>Pasteurellaceae</taxon>
        <taxon>Pasteurella</taxon>
    </lineage>
</organism>
<gene>
    <name type="ordered locus">PM1884</name>
</gene>
<name>Y1884_PASMU</name>